<dbReference type="EC" id="2.1.1.173" evidence="1"/>
<dbReference type="EC" id="2.1.1.264" evidence="1"/>
<dbReference type="EMBL" id="AE017220">
    <property type="protein sequence ID" value="AAX64920.1"/>
    <property type="molecule type" value="Genomic_DNA"/>
</dbReference>
<dbReference type="SMR" id="Q57QU1"/>
<dbReference type="KEGG" id="sec:SCH_1014"/>
<dbReference type="HOGENOM" id="CLU_014042_2_0_6"/>
<dbReference type="Proteomes" id="UP000000538">
    <property type="component" value="Chromosome"/>
</dbReference>
<dbReference type="GO" id="GO:0005737">
    <property type="term" value="C:cytoplasm"/>
    <property type="evidence" value="ECO:0007669"/>
    <property type="project" value="UniProtKB-SubCell"/>
</dbReference>
<dbReference type="GO" id="GO:0052915">
    <property type="term" value="F:23S rRNA (guanine(2445)-N(2))-methyltransferase activity"/>
    <property type="evidence" value="ECO:0007669"/>
    <property type="project" value="UniProtKB-UniRule"/>
</dbReference>
<dbReference type="GO" id="GO:0003723">
    <property type="term" value="F:RNA binding"/>
    <property type="evidence" value="ECO:0007669"/>
    <property type="project" value="UniProtKB-KW"/>
</dbReference>
<dbReference type="GO" id="GO:0070043">
    <property type="term" value="F:rRNA (guanine-N7-)-methyltransferase activity"/>
    <property type="evidence" value="ECO:0007669"/>
    <property type="project" value="UniProtKB-UniRule"/>
</dbReference>
<dbReference type="CDD" id="cd02440">
    <property type="entry name" value="AdoMet_MTases"/>
    <property type="match status" value="2"/>
</dbReference>
<dbReference type="CDD" id="cd11715">
    <property type="entry name" value="THUMP_AdoMetMT"/>
    <property type="match status" value="1"/>
</dbReference>
<dbReference type="FunFam" id="3.30.750.80:FF:000001">
    <property type="entry name" value="Ribosomal RNA large subunit methyltransferase K/L"/>
    <property type="match status" value="1"/>
</dbReference>
<dbReference type="FunFam" id="3.40.50.150:FF:000039">
    <property type="entry name" value="Ribosomal RNA large subunit methyltransferase K/L"/>
    <property type="match status" value="1"/>
</dbReference>
<dbReference type="Gene3D" id="3.30.2130.30">
    <property type="match status" value="1"/>
</dbReference>
<dbReference type="Gene3D" id="3.30.750.80">
    <property type="entry name" value="RNA methyltransferase domain (HRMD) like"/>
    <property type="match status" value="1"/>
</dbReference>
<dbReference type="Gene3D" id="3.40.50.150">
    <property type="entry name" value="Vaccinia Virus protein VP39"/>
    <property type="match status" value="2"/>
</dbReference>
<dbReference type="HAMAP" id="MF_01858">
    <property type="entry name" value="23SrRNA_methyltr_KL"/>
    <property type="match status" value="1"/>
</dbReference>
<dbReference type="InterPro" id="IPR017244">
    <property type="entry name" value="23SrRNA_methyltr_KL"/>
</dbReference>
<dbReference type="InterPro" id="IPR002052">
    <property type="entry name" value="DNA_methylase_N6_adenine_CS"/>
</dbReference>
<dbReference type="InterPro" id="IPR000241">
    <property type="entry name" value="RlmKL-like_Mtase"/>
</dbReference>
<dbReference type="InterPro" id="IPR053943">
    <property type="entry name" value="RlmKL-like_Mtase_CS"/>
</dbReference>
<dbReference type="InterPro" id="IPR054170">
    <property type="entry name" value="RlmL_1st"/>
</dbReference>
<dbReference type="InterPro" id="IPR019614">
    <property type="entry name" value="SAM-dep_methyl-trfase"/>
</dbReference>
<dbReference type="InterPro" id="IPR029063">
    <property type="entry name" value="SAM-dependent_MTases_sf"/>
</dbReference>
<dbReference type="InterPro" id="IPR004114">
    <property type="entry name" value="THUMP_dom"/>
</dbReference>
<dbReference type="NCBIfam" id="NF008748">
    <property type="entry name" value="PRK11783.1"/>
    <property type="match status" value="1"/>
</dbReference>
<dbReference type="PANTHER" id="PTHR47313">
    <property type="entry name" value="RIBOSOMAL RNA LARGE SUBUNIT METHYLTRANSFERASE K/L"/>
    <property type="match status" value="1"/>
</dbReference>
<dbReference type="PANTHER" id="PTHR47313:SF1">
    <property type="entry name" value="RIBOSOMAL RNA LARGE SUBUNIT METHYLTRANSFERASE K_L"/>
    <property type="match status" value="1"/>
</dbReference>
<dbReference type="Pfam" id="PF10672">
    <property type="entry name" value="Methyltrans_SAM"/>
    <property type="match status" value="1"/>
</dbReference>
<dbReference type="Pfam" id="PF22020">
    <property type="entry name" value="RlmL_1st"/>
    <property type="match status" value="1"/>
</dbReference>
<dbReference type="Pfam" id="PF02926">
    <property type="entry name" value="THUMP"/>
    <property type="match status" value="1"/>
</dbReference>
<dbReference type="Pfam" id="PF01170">
    <property type="entry name" value="UPF0020"/>
    <property type="match status" value="1"/>
</dbReference>
<dbReference type="PIRSF" id="PIRSF037618">
    <property type="entry name" value="RNA_Mtase_bacteria_prd"/>
    <property type="match status" value="1"/>
</dbReference>
<dbReference type="PRINTS" id="PR00507">
    <property type="entry name" value="N12N6MTFRASE"/>
</dbReference>
<dbReference type="SMART" id="SM00981">
    <property type="entry name" value="THUMP"/>
    <property type="match status" value="1"/>
</dbReference>
<dbReference type="SUPFAM" id="SSF53335">
    <property type="entry name" value="S-adenosyl-L-methionine-dependent methyltransferases"/>
    <property type="match status" value="2"/>
</dbReference>
<dbReference type="PROSITE" id="PS51165">
    <property type="entry name" value="THUMP"/>
    <property type="match status" value="1"/>
</dbReference>
<dbReference type="PROSITE" id="PS01261">
    <property type="entry name" value="UPF0020"/>
    <property type="match status" value="1"/>
</dbReference>
<gene>
    <name evidence="1" type="primary">rlmL</name>
    <name type="ordered locus">SCH_1014</name>
</gene>
<comment type="function">
    <text evidence="1">Specifically methylates the guanine in position 2445 (m2G2445) and the guanine in position 2069 (m7G2069) of 23S rRNA.</text>
</comment>
<comment type="catalytic activity">
    <reaction evidence="1">
        <text>guanosine(2445) in 23S rRNA + S-adenosyl-L-methionine = N(2)-methylguanosine(2445) in 23S rRNA + S-adenosyl-L-homocysteine + H(+)</text>
        <dbReference type="Rhea" id="RHEA:42740"/>
        <dbReference type="Rhea" id="RHEA-COMP:10215"/>
        <dbReference type="Rhea" id="RHEA-COMP:10216"/>
        <dbReference type="ChEBI" id="CHEBI:15378"/>
        <dbReference type="ChEBI" id="CHEBI:57856"/>
        <dbReference type="ChEBI" id="CHEBI:59789"/>
        <dbReference type="ChEBI" id="CHEBI:74269"/>
        <dbReference type="ChEBI" id="CHEBI:74481"/>
        <dbReference type="EC" id="2.1.1.173"/>
    </reaction>
</comment>
<comment type="catalytic activity">
    <reaction evidence="1">
        <text>guanosine(2069) in 23S rRNA + S-adenosyl-L-methionine = N(2)-methylguanosine(2069) in 23S rRNA + S-adenosyl-L-homocysteine + H(+)</text>
        <dbReference type="Rhea" id="RHEA:43772"/>
        <dbReference type="Rhea" id="RHEA-COMP:10688"/>
        <dbReference type="Rhea" id="RHEA-COMP:10689"/>
        <dbReference type="ChEBI" id="CHEBI:15378"/>
        <dbReference type="ChEBI" id="CHEBI:57856"/>
        <dbReference type="ChEBI" id="CHEBI:59789"/>
        <dbReference type="ChEBI" id="CHEBI:74269"/>
        <dbReference type="ChEBI" id="CHEBI:74481"/>
        <dbReference type="EC" id="2.1.1.264"/>
    </reaction>
</comment>
<comment type="subcellular location">
    <subcellularLocation>
        <location evidence="1">Cytoplasm</location>
    </subcellularLocation>
</comment>
<comment type="similarity">
    <text evidence="1">Belongs to the methyltransferase superfamily. RlmKL family.</text>
</comment>
<evidence type="ECO:0000255" key="1">
    <source>
        <dbReference type="HAMAP-Rule" id="MF_01858"/>
    </source>
</evidence>
<reference key="1">
    <citation type="journal article" date="2005" name="Nucleic Acids Res.">
        <title>The genome sequence of Salmonella enterica serovar Choleraesuis, a highly invasive and resistant zoonotic pathogen.</title>
        <authorList>
            <person name="Chiu C.-H."/>
            <person name="Tang P."/>
            <person name="Chu C."/>
            <person name="Hu S."/>
            <person name="Bao Q."/>
            <person name="Yu J."/>
            <person name="Chou Y.-Y."/>
            <person name="Wang H.-S."/>
            <person name="Lee Y.-S."/>
        </authorList>
    </citation>
    <scope>NUCLEOTIDE SEQUENCE [LARGE SCALE GENOMIC DNA]</scope>
    <source>
        <strain>SC-B67</strain>
    </source>
</reference>
<protein>
    <recommendedName>
        <fullName evidence="1">Ribosomal RNA large subunit methyltransferase K/L</fullName>
    </recommendedName>
    <domain>
        <recommendedName>
            <fullName evidence="1">23S rRNA m2G2445 methyltransferase</fullName>
            <ecNumber evidence="1">2.1.1.173</ecNumber>
        </recommendedName>
        <alternativeName>
            <fullName evidence="1">rRNA (guanine-N(2)-)-methyltransferase RlmL</fullName>
        </alternativeName>
    </domain>
    <domain>
        <recommendedName>
            <fullName evidence="1">23S rRNA m7G2069 methyltransferase</fullName>
            <ecNumber evidence="1">2.1.1.264</ecNumber>
        </recommendedName>
        <alternativeName>
            <fullName evidence="1">rRNA (guanine-N(7)-)-methyltransferase RlmK</fullName>
        </alternativeName>
    </domain>
</protein>
<organism>
    <name type="scientific">Salmonella choleraesuis (strain SC-B67)</name>
    <dbReference type="NCBI Taxonomy" id="321314"/>
    <lineage>
        <taxon>Bacteria</taxon>
        <taxon>Pseudomonadati</taxon>
        <taxon>Pseudomonadota</taxon>
        <taxon>Gammaproteobacteria</taxon>
        <taxon>Enterobacterales</taxon>
        <taxon>Enterobacteriaceae</taxon>
        <taxon>Salmonella</taxon>
    </lineage>
</organism>
<keyword id="KW-0963">Cytoplasm</keyword>
<keyword id="KW-0489">Methyltransferase</keyword>
<keyword id="KW-0694">RNA-binding</keyword>
<keyword id="KW-0698">rRNA processing</keyword>
<keyword id="KW-0949">S-adenosyl-L-methionine</keyword>
<keyword id="KW-0808">Transferase</keyword>
<feature type="chain" id="PRO_0000366806" description="Ribosomal RNA large subunit methyltransferase K/L">
    <location>
        <begin position="1"/>
        <end position="702"/>
    </location>
</feature>
<feature type="domain" description="THUMP" evidence="1">
    <location>
        <begin position="43"/>
        <end position="154"/>
    </location>
</feature>
<accession>Q57QU1</accession>
<sequence length="702" mass="78865">MNSLFASTARGLEELLKTELEKLGAVGCQVVQGGVHFQGDTRLIYQSLMWSRLASRIILPMGECKVYSDLDLYLGVQAINWTEIFNLGATFAVHFSGLNDTIRNSQYGAMKVKDAIVDAFTRKNLPRPNVDRESPDLRINVWLNKETASIALDLSGDGLHLRGYRDRTGLAPIKETLAAAIVMRSGWQPGTPLLDPMCGSGTLLIEAAMWATDRAPGLHRGHWGFSGWAQHDETIWQEVKAEAQTRARKGLAEYSSHFYGSDSDARVIERARSNARRAGIGELITFEVKDVAQLSNPLPKGPYGTVISNPPYGERLDSEPALIALHSLLGRTMKNQFGGWNLSLFSASPDLLGSLQLRADKQFKAKNGPLDCVQKNYHIAETTADSKPATVAEDYANRLRKNLKKLEKWARQEGIECYRLYDADLPEYNVAVDRYGDWAVIQEYAPPKTVDAQKARQRLFDIIAATLSVLGIPPNKLVLKTRERQKGKNQYQKMSEKGEFLEVSEYNARLWVNLTDYLDTGLFLDHRIARRMLGEMSKGKDFLNLFSYTGSASVHAGLGGARSTTTVDMSRTYLEWAERNLRLNGLSGRAHRLIQADCLGWLREANEQFDLIFIDPPTFSNSKRMEESFDVQRDHVALMKDLKRLLRKGGTIMFSNNKRGFRMDLEGLAELGLTAQEITQKTLSPDFARNRQIHNCWLIRAA</sequence>
<proteinExistence type="inferred from homology"/>
<name>RLMKL_SALCH</name>